<feature type="chain" id="PRO_1000071979" description="Homoserine kinase">
    <location>
        <begin position="1"/>
        <end position="321"/>
    </location>
</feature>
<reference key="1">
    <citation type="journal article" date="2011" name="Stand. Genomic Sci.">
        <title>Complete genome sequence of Parvibaculum lavamentivorans type strain (DS-1(T)).</title>
        <authorList>
            <person name="Schleheck D."/>
            <person name="Weiss M."/>
            <person name="Pitluck S."/>
            <person name="Bruce D."/>
            <person name="Land M.L."/>
            <person name="Han S."/>
            <person name="Saunders E."/>
            <person name="Tapia R."/>
            <person name="Detter C."/>
            <person name="Brettin T."/>
            <person name="Han J."/>
            <person name="Woyke T."/>
            <person name="Goodwin L."/>
            <person name="Pennacchio L."/>
            <person name="Nolan M."/>
            <person name="Cook A.M."/>
            <person name="Kjelleberg S."/>
            <person name="Thomas T."/>
        </authorList>
    </citation>
    <scope>NUCLEOTIDE SEQUENCE [LARGE SCALE GENOMIC DNA]</scope>
    <source>
        <strain>DS-1 / DSM 13023 / NCIMB 13966</strain>
    </source>
</reference>
<evidence type="ECO:0000255" key="1">
    <source>
        <dbReference type="HAMAP-Rule" id="MF_00301"/>
    </source>
</evidence>
<comment type="catalytic activity">
    <reaction evidence="1">
        <text>L-homoserine + ATP = O-phospho-L-homoserine + ADP + H(+)</text>
        <dbReference type="Rhea" id="RHEA:13985"/>
        <dbReference type="ChEBI" id="CHEBI:15378"/>
        <dbReference type="ChEBI" id="CHEBI:30616"/>
        <dbReference type="ChEBI" id="CHEBI:57476"/>
        <dbReference type="ChEBI" id="CHEBI:57590"/>
        <dbReference type="ChEBI" id="CHEBI:456216"/>
        <dbReference type="EC" id="2.7.1.39"/>
    </reaction>
</comment>
<comment type="pathway">
    <text evidence="1">Amino-acid biosynthesis; L-threonine biosynthesis; L-threonine from L-aspartate: step 4/5.</text>
</comment>
<comment type="similarity">
    <text evidence="1">Belongs to the pseudomonas-type ThrB family.</text>
</comment>
<name>KHSE_PARL1</name>
<protein>
    <recommendedName>
        <fullName evidence="1">Homoserine kinase</fullName>
        <shortName evidence="1">HK</shortName>
        <shortName evidence="1">HSK</shortName>
        <ecNumber evidence="1">2.7.1.39</ecNumber>
    </recommendedName>
</protein>
<accession>A7HQX5</accession>
<gene>
    <name evidence="1" type="primary">thrB</name>
    <name type="ordered locus">Plav_0685</name>
</gene>
<proteinExistence type="inferred from homology"/>
<sequence>MAVYTEVPDEELEAFLATYDIGTLMSYKGIAEGVENSNFMLHTDAGTYFLTLYEKRVAESELPFFLGLMNHLVDRGISCPTPIRNRKGEMLGRLAERPAAIVSFLEGISVRRPQPRHCVELGRALAQLHMAGADFKLARKNALNVDGWGPLFDSCRDGIDAYQPGLAQELDKELAVLTREWPRDLPHGVIHADLFPDNVFFIGDRLSGLIDFYFACNDAFAYDLAICLNAWCFEADGSFNITKARALLQAYTQVRPLEPAEIHALPLLARGSAMRFLLTRLYDLINHPPGAFVKPKDPKEYLTRLRFHRGVASPAGYGLDA</sequence>
<keyword id="KW-0028">Amino-acid biosynthesis</keyword>
<keyword id="KW-0067">ATP-binding</keyword>
<keyword id="KW-0418">Kinase</keyword>
<keyword id="KW-0547">Nucleotide-binding</keyword>
<keyword id="KW-1185">Reference proteome</keyword>
<keyword id="KW-0791">Threonine biosynthesis</keyword>
<keyword id="KW-0808">Transferase</keyword>
<dbReference type="EC" id="2.7.1.39" evidence="1"/>
<dbReference type="EMBL" id="CP000774">
    <property type="protein sequence ID" value="ABS62308.1"/>
    <property type="molecule type" value="Genomic_DNA"/>
</dbReference>
<dbReference type="RefSeq" id="WP_011995599.1">
    <property type="nucleotide sequence ID" value="NC_009719.1"/>
</dbReference>
<dbReference type="SMR" id="A7HQX5"/>
<dbReference type="STRING" id="402881.Plav_0685"/>
<dbReference type="KEGG" id="pla:Plav_0685"/>
<dbReference type="eggNOG" id="COG2334">
    <property type="taxonomic scope" value="Bacteria"/>
</dbReference>
<dbReference type="HOGENOM" id="CLU_053300_1_0_5"/>
<dbReference type="OrthoDB" id="9777460at2"/>
<dbReference type="UniPathway" id="UPA00050">
    <property type="reaction ID" value="UER00064"/>
</dbReference>
<dbReference type="Proteomes" id="UP000006377">
    <property type="component" value="Chromosome"/>
</dbReference>
<dbReference type="GO" id="GO:0005524">
    <property type="term" value="F:ATP binding"/>
    <property type="evidence" value="ECO:0007669"/>
    <property type="project" value="UniProtKB-KW"/>
</dbReference>
<dbReference type="GO" id="GO:0004413">
    <property type="term" value="F:homoserine kinase activity"/>
    <property type="evidence" value="ECO:0007669"/>
    <property type="project" value="UniProtKB-UniRule"/>
</dbReference>
<dbReference type="GO" id="GO:0009088">
    <property type="term" value="P:threonine biosynthetic process"/>
    <property type="evidence" value="ECO:0007669"/>
    <property type="project" value="UniProtKB-UniRule"/>
</dbReference>
<dbReference type="CDD" id="cd05153">
    <property type="entry name" value="HomoserineK_II"/>
    <property type="match status" value="1"/>
</dbReference>
<dbReference type="Gene3D" id="3.90.1200.10">
    <property type="match status" value="1"/>
</dbReference>
<dbReference type="Gene3D" id="3.30.200.20">
    <property type="entry name" value="Phosphorylase Kinase, domain 1"/>
    <property type="match status" value="1"/>
</dbReference>
<dbReference type="HAMAP" id="MF_00301">
    <property type="entry name" value="Homoser_kinase_2"/>
    <property type="match status" value="1"/>
</dbReference>
<dbReference type="InterPro" id="IPR002575">
    <property type="entry name" value="Aminoglycoside_PTrfase"/>
</dbReference>
<dbReference type="InterPro" id="IPR005280">
    <property type="entry name" value="Homoserine_kinase_II"/>
</dbReference>
<dbReference type="InterPro" id="IPR011009">
    <property type="entry name" value="Kinase-like_dom_sf"/>
</dbReference>
<dbReference type="InterPro" id="IPR050249">
    <property type="entry name" value="Pseudomonas-type_ThrB"/>
</dbReference>
<dbReference type="NCBIfam" id="NF003558">
    <property type="entry name" value="PRK05231.1"/>
    <property type="match status" value="1"/>
</dbReference>
<dbReference type="NCBIfam" id="TIGR00938">
    <property type="entry name" value="thrB_alt"/>
    <property type="match status" value="1"/>
</dbReference>
<dbReference type="PANTHER" id="PTHR21064:SF6">
    <property type="entry name" value="AMINOGLYCOSIDE PHOSPHOTRANSFERASE DOMAIN-CONTAINING PROTEIN"/>
    <property type="match status" value="1"/>
</dbReference>
<dbReference type="PANTHER" id="PTHR21064">
    <property type="entry name" value="AMINOGLYCOSIDE PHOSPHOTRANSFERASE DOMAIN-CONTAINING PROTEIN-RELATED"/>
    <property type="match status" value="1"/>
</dbReference>
<dbReference type="Pfam" id="PF01636">
    <property type="entry name" value="APH"/>
    <property type="match status" value="1"/>
</dbReference>
<dbReference type="SUPFAM" id="SSF56112">
    <property type="entry name" value="Protein kinase-like (PK-like)"/>
    <property type="match status" value="1"/>
</dbReference>
<organism>
    <name type="scientific">Parvibaculum lavamentivorans (strain DS-1 / DSM 13023 / NCIMB 13966)</name>
    <dbReference type="NCBI Taxonomy" id="402881"/>
    <lineage>
        <taxon>Bacteria</taxon>
        <taxon>Pseudomonadati</taxon>
        <taxon>Pseudomonadota</taxon>
        <taxon>Alphaproteobacteria</taxon>
        <taxon>Hyphomicrobiales</taxon>
        <taxon>Parvibaculaceae</taxon>
        <taxon>Parvibaculum</taxon>
    </lineage>
</organism>